<proteinExistence type="inferred from homology"/>
<reference key="1">
    <citation type="journal article" date="2005" name="Nucleic Acids Res.">
        <title>Genome dynamics and diversity of Shigella species, the etiologic agents of bacillary dysentery.</title>
        <authorList>
            <person name="Yang F."/>
            <person name="Yang J."/>
            <person name="Zhang X."/>
            <person name="Chen L."/>
            <person name="Jiang Y."/>
            <person name="Yan Y."/>
            <person name="Tang X."/>
            <person name="Wang J."/>
            <person name="Xiong Z."/>
            <person name="Dong J."/>
            <person name="Xue Y."/>
            <person name="Zhu Y."/>
            <person name="Xu X."/>
            <person name="Sun L."/>
            <person name="Chen S."/>
            <person name="Nie H."/>
            <person name="Peng J."/>
            <person name="Xu J."/>
            <person name="Wang Y."/>
            <person name="Yuan Z."/>
            <person name="Wen Y."/>
            <person name="Yao Z."/>
            <person name="Shen Y."/>
            <person name="Qiang B."/>
            <person name="Hou Y."/>
            <person name="Yu J."/>
            <person name="Jin Q."/>
        </authorList>
    </citation>
    <scope>NUCLEOTIDE SEQUENCE [LARGE SCALE GENOMIC DNA]</scope>
    <source>
        <strain>Sd197</strain>
    </source>
</reference>
<keyword id="KW-0963">Cytoplasm</keyword>
<keyword id="KW-0274">FAD</keyword>
<keyword id="KW-0285">Flavoprotein</keyword>
<keyword id="KW-0520">NAD</keyword>
<keyword id="KW-0560">Oxidoreductase</keyword>
<keyword id="KW-1185">Reference proteome</keyword>
<dbReference type="EC" id="1.18.1.-" evidence="1"/>
<dbReference type="EMBL" id="CP000034">
    <property type="protein sequence ID" value="ABB62938.1"/>
    <property type="molecule type" value="Genomic_DNA"/>
</dbReference>
<dbReference type="RefSeq" id="WP_000064743.1">
    <property type="nucleotide sequence ID" value="NC_007606.1"/>
</dbReference>
<dbReference type="RefSeq" id="YP_404429.1">
    <property type="nucleotide sequence ID" value="NC_007606.1"/>
</dbReference>
<dbReference type="SMR" id="Q32CL7"/>
<dbReference type="STRING" id="300267.SDY_2908"/>
<dbReference type="EnsemblBacteria" id="ABB62938">
    <property type="protein sequence ID" value="ABB62938"/>
    <property type="gene ID" value="SDY_2908"/>
</dbReference>
<dbReference type="KEGG" id="sdy:SDY_2908"/>
<dbReference type="PATRIC" id="fig|300267.13.peg.3493"/>
<dbReference type="HOGENOM" id="CLU_003291_4_4_6"/>
<dbReference type="UniPathway" id="UPA00638"/>
<dbReference type="Proteomes" id="UP000002716">
    <property type="component" value="Chromosome"/>
</dbReference>
<dbReference type="GO" id="GO:0005737">
    <property type="term" value="C:cytoplasm"/>
    <property type="evidence" value="ECO:0007669"/>
    <property type="project" value="UniProtKB-SubCell"/>
</dbReference>
<dbReference type="GO" id="GO:0016731">
    <property type="term" value="F:oxidoreductase activity, acting on iron-sulfur proteins as donors, NAD or NADP as acceptor"/>
    <property type="evidence" value="ECO:0007669"/>
    <property type="project" value="UniProtKB-UniRule"/>
</dbReference>
<dbReference type="FunFam" id="3.30.390.120:FF:000001">
    <property type="entry name" value="Nitric oxide reductase FlRd-NAD(+) reductase"/>
    <property type="match status" value="1"/>
</dbReference>
<dbReference type="FunFam" id="3.50.50.60:FF:000075">
    <property type="entry name" value="Nitric oxide reductase FlRd-NAD(+) reductase"/>
    <property type="match status" value="1"/>
</dbReference>
<dbReference type="Gene3D" id="3.30.390.120">
    <property type="match status" value="1"/>
</dbReference>
<dbReference type="Gene3D" id="3.50.50.60">
    <property type="entry name" value="FAD/NAD(P)-binding domain"/>
    <property type="match status" value="2"/>
</dbReference>
<dbReference type="HAMAP" id="MF_01313">
    <property type="entry name" value="NorW"/>
    <property type="match status" value="1"/>
</dbReference>
<dbReference type="InterPro" id="IPR050260">
    <property type="entry name" value="FAD-bd_OxRdtase"/>
</dbReference>
<dbReference type="InterPro" id="IPR036188">
    <property type="entry name" value="FAD/NAD-bd_sf"/>
</dbReference>
<dbReference type="InterPro" id="IPR023753">
    <property type="entry name" value="FAD/NAD-binding_dom"/>
</dbReference>
<dbReference type="InterPro" id="IPR023961">
    <property type="entry name" value="NO_rdtase_NorW"/>
</dbReference>
<dbReference type="InterPro" id="IPR041364">
    <property type="entry name" value="Rbx-bd"/>
</dbReference>
<dbReference type="NCBIfam" id="NF003437">
    <property type="entry name" value="PRK04965.1"/>
    <property type="match status" value="1"/>
</dbReference>
<dbReference type="PANTHER" id="PTHR43429:SF3">
    <property type="entry name" value="NITRITE REDUCTASE [NAD(P)H]"/>
    <property type="match status" value="1"/>
</dbReference>
<dbReference type="PANTHER" id="PTHR43429">
    <property type="entry name" value="PYRIDINE NUCLEOTIDE-DISULFIDE OXIDOREDUCTASE DOMAIN-CONTAINING"/>
    <property type="match status" value="1"/>
</dbReference>
<dbReference type="Pfam" id="PF07992">
    <property type="entry name" value="Pyr_redox_2"/>
    <property type="match status" value="1"/>
</dbReference>
<dbReference type="Pfam" id="PF18113">
    <property type="entry name" value="Rbx_binding"/>
    <property type="match status" value="1"/>
</dbReference>
<dbReference type="PRINTS" id="PR00368">
    <property type="entry name" value="FADPNR"/>
</dbReference>
<dbReference type="PRINTS" id="PR00411">
    <property type="entry name" value="PNDRDTASEI"/>
</dbReference>
<dbReference type="SUPFAM" id="SSF51905">
    <property type="entry name" value="FAD/NAD(P)-binding domain"/>
    <property type="match status" value="1"/>
</dbReference>
<evidence type="ECO:0000255" key="1">
    <source>
        <dbReference type="HAMAP-Rule" id="MF_01313"/>
    </source>
</evidence>
<comment type="function">
    <text evidence="1">One of at least two accessory proteins for anaerobic nitric oxide (NO) reductase. Reduces the rubredoxin moiety of NO reductase.</text>
</comment>
<comment type="catalytic activity">
    <reaction evidence="1">
        <text>2 reduced [nitric oxide reductase rubredoxin domain] + NAD(+) + H(+) = 2 oxidized [nitric oxide reductase rubredoxin domain] + NADH</text>
        <dbReference type="Rhea" id="RHEA:42960"/>
        <dbReference type="Rhea" id="RHEA-COMP:10304"/>
        <dbReference type="Rhea" id="RHEA-COMP:10305"/>
        <dbReference type="ChEBI" id="CHEBI:15378"/>
        <dbReference type="ChEBI" id="CHEBI:29033"/>
        <dbReference type="ChEBI" id="CHEBI:29034"/>
        <dbReference type="ChEBI" id="CHEBI:57540"/>
        <dbReference type="ChEBI" id="CHEBI:57945"/>
    </reaction>
</comment>
<comment type="cofactor">
    <cofactor evidence="1">
        <name>FAD</name>
        <dbReference type="ChEBI" id="CHEBI:57692"/>
    </cofactor>
</comment>
<comment type="pathway">
    <text evidence="1">Nitrogen metabolism; nitric oxide reduction.</text>
</comment>
<comment type="subcellular location">
    <subcellularLocation>
        <location evidence="1">Cytoplasm</location>
    </subcellularLocation>
</comment>
<comment type="similarity">
    <text evidence="1">Belongs to the FAD-dependent oxidoreductase family.</text>
</comment>
<name>NORW_SHIDS</name>
<accession>Q32CL7</accession>
<protein>
    <recommendedName>
        <fullName evidence="1">Nitric oxide reductase FlRd-NAD(+) reductase</fullName>
        <ecNumber evidence="1">1.18.1.-</ecNumber>
    </recommendedName>
    <alternativeName>
        <fullName evidence="1">Flavorubredoxin reductase</fullName>
        <shortName evidence="1">FlRd-reductase</shortName>
        <shortName evidence="1">FlavoRb reductase</shortName>
    </alternativeName>
</protein>
<feature type="chain" id="PRO_0000305611" description="Nitric oxide reductase FlRd-NAD(+) reductase">
    <location>
        <begin position="1"/>
        <end position="377"/>
    </location>
</feature>
<organism>
    <name type="scientific">Shigella dysenteriae serotype 1 (strain Sd197)</name>
    <dbReference type="NCBI Taxonomy" id="300267"/>
    <lineage>
        <taxon>Bacteria</taxon>
        <taxon>Pseudomonadati</taxon>
        <taxon>Pseudomonadota</taxon>
        <taxon>Gammaproteobacteria</taxon>
        <taxon>Enterobacterales</taxon>
        <taxon>Enterobacteriaceae</taxon>
        <taxon>Shigella</taxon>
    </lineage>
</organism>
<gene>
    <name evidence="1" type="primary">norW</name>
    <name evidence="1" type="synonym">flrR</name>
    <name type="ordered locus">SDY_2908</name>
</gene>
<sequence length="377" mass="41289">MSNGIVIIGSGFAARQLVKNIRKQDATIPLTLIAADSMDEYNKPDLSHVISQGQRADDLTRQTAGEFAEQFNLHLFPHTWVTDIDAEARVVKSQNNQWQYDKLVLATGASAFVPSVPGRELMLTLNSQQEYRACETQLRDARRVLIVGGGLIGSELAMDFCRAGKMVTLIDNAASILASLMPPEVSSRLQHRLTEMGVHLLLKSQLQGLEKTDSGILATLDRQRSIEVDAVIAATGLRPETALARRAGLTINRGVCVDSYLQTSNADIYALGDCAEINGQVLPFLQPIQLSAMVLAKNLLGNNTPLKLPAMLVKIKTPELPLHLAGETQRQDLRWQINTESQGMVARGVDDADQLRAFVVSEDRMKEAFGLLKTLPV</sequence>